<dbReference type="EMBL" id="AE017262">
    <property type="protein sequence ID" value="AAT04198.1"/>
    <property type="molecule type" value="Genomic_DNA"/>
</dbReference>
<dbReference type="RefSeq" id="WP_010958897.1">
    <property type="nucleotide sequence ID" value="NC_002973.6"/>
</dbReference>
<dbReference type="SMR" id="Q71ZR6"/>
<dbReference type="DNASU" id="2799603"/>
<dbReference type="KEGG" id="lmf:LMOf2365_1423"/>
<dbReference type="HOGENOM" id="CLU_004131_4_1_9"/>
<dbReference type="GO" id="GO:0032300">
    <property type="term" value="C:mismatch repair complex"/>
    <property type="evidence" value="ECO:0007669"/>
    <property type="project" value="InterPro"/>
</dbReference>
<dbReference type="GO" id="GO:0005524">
    <property type="term" value="F:ATP binding"/>
    <property type="evidence" value="ECO:0007669"/>
    <property type="project" value="InterPro"/>
</dbReference>
<dbReference type="GO" id="GO:0016887">
    <property type="term" value="F:ATP hydrolysis activity"/>
    <property type="evidence" value="ECO:0007669"/>
    <property type="project" value="InterPro"/>
</dbReference>
<dbReference type="GO" id="GO:0140664">
    <property type="term" value="F:ATP-dependent DNA damage sensor activity"/>
    <property type="evidence" value="ECO:0007669"/>
    <property type="project" value="InterPro"/>
</dbReference>
<dbReference type="GO" id="GO:0030983">
    <property type="term" value="F:mismatched DNA binding"/>
    <property type="evidence" value="ECO:0007669"/>
    <property type="project" value="InterPro"/>
</dbReference>
<dbReference type="GO" id="GO:0006298">
    <property type="term" value="P:mismatch repair"/>
    <property type="evidence" value="ECO:0007669"/>
    <property type="project" value="UniProtKB-UniRule"/>
</dbReference>
<dbReference type="CDD" id="cd16926">
    <property type="entry name" value="HATPase_MutL-MLH-PMS-like"/>
    <property type="match status" value="1"/>
</dbReference>
<dbReference type="CDD" id="cd00782">
    <property type="entry name" value="MutL_Trans"/>
    <property type="match status" value="1"/>
</dbReference>
<dbReference type="FunFam" id="3.30.1370.100:FF:000004">
    <property type="entry name" value="DNA mismatch repair endonuclease MutL"/>
    <property type="match status" value="1"/>
</dbReference>
<dbReference type="FunFam" id="3.30.230.10:FF:000036">
    <property type="entry name" value="DNA mismatch repair endonuclease MutL"/>
    <property type="match status" value="1"/>
</dbReference>
<dbReference type="FunFam" id="3.30.565.10:FF:000003">
    <property type="entry name" value="DNA mismatch repair endonuclease MutL"/>
    <property type="match status" value="1"/>
</dbReference>
<dbReference type="Gene3D" id="3.30.230.10">
    <property type="match status" value="1"/>
</dbReference>
<dbReference type="Gene3D" id="3.30.565.10">
    <property type="entry name" value="Histidine kinase-like ATPase, C-terminal domain"/>
    <property type="match status" value="1"/>
</dbReference>
<dbReference type="Gene3D" id="3.30.1540.20">
    <property type="entry name" value="MutL, C-terminal domain, dimerisation subdomain"/>
    <property type="match status" value="1"/>
</dbReference>
<dbReference type="Gene3D" id="3.30.1370.100">
    <property type="entry name" value="MutL, C-terminal domain, regulatory subdomain"/>
    <property type="match status" value="1"/>
</dbReference>
<dbReference type="HAMAP" id="MF_00149">
    <property type="entry name" value="DNA_mis_repair"/>
    <property type="match status" value="1"/>
</dbReference>
<dbReference type="InterPro" id="IPR014762">
    <property type="entry name" value="DNA_mismatch_repair_CS"/>
</dbReference>
<dbReference type="InterPro" id="IPR020667">
    <property type="entry name" value="DNA_mismatch_repair_MutL"/>
</dbReference>
<dbReference type="InterPro" id="IPR013507">
    <property type="entry name" value="DNA_mismatch_S5_2-like"/>
</dbReference>
<dbReference type="InterPro" id="IPR036890">
    <property type="entry name" value="HATPase_C_sf"/>
</dbReference>
<dbReference type="InterPro" id="IPR002099">
    <property type="entry name" value="MutL/Mlh/PMS"/>
</dbReference>
<dbReference type="InterPro" id="IPR038973">
    <property type="entry name" value="MutL/Mlh/Pms-like"/>
</dbReference>
<dbReference type="InterPro" id="IPR014790">
    <property type="entry name" value="MutL_C"/>
</dbReference>
<dbReference type="InterPro" id="IPR042120">
    <property type="entry name" value="MutL_C_dimsub"/>
</dbReference>
<dbReference type="InterPro" id="IPR042121">
    <property type="entry name" value="MutL_C_regsub"/>
</dbReference>
<dbReference type="InterPro" id="IPR037198">
    <property type="entry name" value="MutL_C_sf"/>
</dbReference>
<dbReference type="InterPro" id="IPR020568">
    <property type="entry name" value="Ribosomal_Su5_D2-typ_SF"/>
</dbReference>
<dbReference type="InterPro" id="IPR014721">
    <property type="entry name" value="Ribsml_uS5_D2-typ_fold_subgr"/>
</dbReference>
<dbReference type="NCBIfam" id="TIGR00585">
    <property type="entry name" value="mutl"/>
    <property type="match status" value="1"/>
</dbReference>
<dbReference type="PANTHER" id="PTHR10073">
    <property type="entry name" value="DNA MISMATCH REPAIR PROTEIN MLH, PMS, MUTL"/>
    <property type="match status" value="1"/>
</dbReference>
<dbReference type="PANTHER" id="PTHR10073:SF12">
    <property type="entry name" value="DNA MISMATCH REPAIR PROTEIN MLH1"/>
    <property type="match status" value="1"/>
</dbReference>
<dbReference type="Pfam" id="PF01119">
    <property type="entry name" value="DNA_mis_repair"/>
    <property type="match status" value="1"/>
</dbReference>
<dbReference type="Pfam" id="PF13589">
    <property type="entry name" value="HATPase_c_3"/>
    <property type="match status" value="1"/>
</dbReference>
<dbReference type="Pfam" id="PF08676">
    <property type="entry name" value="MutL_C"/>
    <property type="match status" value="1"/>
</dbReference>
<dbReference type="SMART" id="SM01340">
    <property type="entry name" value="DNA_mis_repair"/>
    <property type="match status" value="1"/>
</dbReference>
<dbReference type="SMART" id="SM00853">
    <property type="entry name" value="MutL_C"/>
    <property type="match status" value="1"/>
</dbReference>
<dbReference type="SUPFAM" id="SSF55874">
    <property type="entry name" value="ATPase domain of HSP90 chaperone/DNA topoisomerase II/histidine kinase"/>
    <property type="match status" value="1"/>
</dbReference>
<dbReference type="SUPFAM" id="SSF118116">
    <property type="entry name" value="DNA mismatch repair protein MutL"/>
    <property type="match status" value="1"/>
</dbReference>
<dbReference type="SUPFAM" id="SSF54211">
    <property type="entry name" value="Ribosomal protein S5 domain 2-like"/>
    <property type="match status" value="1"/>
</dbReference>
<dbReference type="PROSITE" id="PS00058">
    <property type="entry name" value="DNA_MISMATCH_REPAIR_1"/>
    <property type="match status" value="1"/>
</dbReference>
<sequence length="603" mass="68091">MAKHIVELTDALSNKIAAGEVVERPASVVKELVENAIDAGSTVIDILVEEAGLNKITIIDNGSGIEEEDVATAFLRHATSKIKNEADLFRVHTLGFRGEALPSIASVSHLEMETSTGEAKGTTISLEGGKIIEQKSGHARKGTQIEVSQLFFNTPARLKYLKSLPTELGNITDILNRLALAHPDISFRFSHNGKPLLQTNGNGELRQVIAAIYGVSIAKKSVPVKAESLDFKISGYAVLPEVNRSNRNYISTIINGRFIKNFALVKAIQEGYHTLLPIGRFPIIVLQIEMDPIIVDVNVHPAKLEVRLSKEKELGQLISQMIKETFHKLQLIPDGEISKKQKEDQKSEQIQMSFEENKPVKETPTLFSKPTIPEYVPSDEDAPREDDFILETMPSYEPESQAEQEEHTKERIPKMYPIGQMHATYIFAQNENGLYIIDQHAAQERIKYEFYREKIGEVSRELQELLVPIVLEFPADEYVRLEEQKAKLEEVGVFLENFGQNSFIIRAHPTWFPKDQEEEMLREIIDEALSAPSISIHKLREDTAIMMSCKKSIKANHYLTTQDMEALLDTLREASDPFTCPHGRPVIIQYSTYELEKMFKRVM</sequence>
<organism>
    <name type="scientific">Listeria monocytogenes serotype 4b (strain F2365)</name>
    <dbReference type="NCBI Taxonomy" id="265669"/>
    <lineage>
        <taxon>Bacteria</taxon>
        <taxon>Bacillati</taxon>
        <taxon>Bacillota</taxon>
        <taxon>Bacilli</taxon>
        <taxon>Bacillales</taxon>
        <taxon>Listeriaceae</taxon>
        <taxon>Listeria</taxon>
    </lineage>
</organism>
<gene>
    <name evidence="1" type="primary">mutL</name>
    <name type="ordered locus">LMOf2365_1423</name>
</gene>
<name>MUTL_LISMF</name>
<proteinExistence type="inferred from homology"/>
<accession>Q71ZR6</accession>
<evidence type="ECO:0000255" key="1">
    <source>
        <dbReference type="HAMAP-Rule" id="MF_00149"/>
    </source>
</evidence>
<evidence type="ECO:0000256" key="2">
    <source>
        <dbReference type="SAM" id="MobiDB-lite"/>
    </source>
</evidence>
<comment type="function">
    <text evidence="1">This protein is involved in the repair of mismatches in DNA. It is required for dam-dependent methyl-directed DNA mismatch repair. May act as a 'molecular matchmaker', a protein that promotes the formation of a stable complex between two or more DNA-binding proteins in an ATP-dependent manner without itself being part of a final effector complex.</text>
</comment>
<comment type="similarity">
    <text evidence="1">Belongs to the DNA mismatch repair MutL/HexB family.</text>
</comment>
<keyword id="KW-0227">DNA damage</keyword>
<keyword id="KW-0234">DNA repair</keyword>
<feature type="chain" id="PRO_0000177953" description="DNA mismatch repair protein MutL">
    <location>
        <begin position="1"/>
        <end position="603"/>
    </location>
</feature>
<feature type="region of interest" description="Disordered" evidence="2">
    <location>
        <begin position="337"/>
        <end position="383"/>
    </location>
</feature>
<feature type="compositionally biased region" description="Basic and acidic residues" evidence="2">
    <location>
        <begin position="337"/>
        <end position="347"/>
    </location>
</feature>
<protein>
    <recommendedName>
        <fullName evidence="1">DNA mismatch repair protein MutL</fullName>
    </recommendedName>
</protein>
<reference key="1">
    <citation type="journal article" date="2004" name="Nucleic Acids Res.">
        <title>Whole genome comparisons of serotype 4b and 1/2a strains of the food-borne pathogen Listeria monocytogenes reveal new insights into the core genome components of this species.</title>
        <authorList>
            <person name="Nelson K.E."/>
            <person name="Fouts D.E."/>
            <person name="Mongodin E.F."/>
            <person name="Ravel J."/>
            <person name="DeBoy R.T."/>
            <person name="Kolonay J.F."/>
            <person name="Rasko D.A."/>
            <person name="Angiuoli S.V."/>
            <person name="Gill S.R."/>
            <person name="Paulsen I.T."/>
            <person name="Peterson J.D."/>
            <person name="White O."/>
            <person name="Nelson W.C."/>
            <person name="Nierman W.C."/>
            <person name="Beanan M.J."/>
            <person name="Brinkac L.M."/>
            <person name="Daugherty S.C."/>
            <person name="Dodson R.J."/>
            <person name="Durkin A.S."/>
            <person name="Madupu R."/>
            <person name="Haft D.H."/>
            <person name="Selengut J."/>
            <person name="Van Aken S.E."/>
            <person name="Khouri H.M."/>
            <person name="Fedorova N."/>
            <person name="Forberger H.A."/>
            <person name="Tran B."/>
            <person name="Kathariou S."/>
            <person name="Wonderling L.D."/>
            <person name="Uhlich G.A."/>
            <person name="Bayles D.O."/>
            <person name="Luchansky J.B."/>
            <person name="Fraser C.M."/>
        </authorList>
    </citation>
    <scope>NUCLEOTIDE SEQUENCE [LARGE SCALE GENOMIC DNA]</scope>
    <source>
        <strain>F2365</strain>
    </source>
</reference>